<keyword id="KW-0143">Chaperone</keyword>
<keyword id="KW-0963">Cytoplasm</keyword>
<keyword id="KW-0690">Ribosome biogenesis</keyword>
<keyword id="KW-0698">rRNA processing</keyword>
<feature type="chain" id="PRO_0000244139" description="Ribosome maturation factor RimM">
    <location>
        <begin position="1"/>
        <end position="163"/>
    </location>
</feature>
<feature type="domain" description="PRC barrel" evidence="1">
    <location>
        <begin position="90"/>
        <end position="155"/>
    </location>
</feature>
<name>RIMM_NEOSM</name>
<proteinExistence type="inferred from homology"/>
<gene>
    <name evidence="1" type="primary">rimM</name>
    <name type="ordered locus">NSE_0124</name>
</gene>
<organism>
    <name type="scientific">Neorickettsia sennetsu (strain ATCC VR-367 / Miyayama)</name>
    <name type="common">Ehrlichia sennetsu</name>
    <dbReference type="NCBI Taxonomy" id="222891"/>
    <lineage>
        <taxon>Bacteria</taxon>
        <taxon>Pseudomonadati</taxon>
        <taxon>Pseudomonadota</taxon>
        <taxon>Alphaproteobacteria</taxon>
        <taxon>Rickettsiales</taxon>
        <taxon>Anaplasmataceae</taxon>
        <taxon>Neorickettsia</taxon>
    </lineage>
</organism>
<comment type="function">
    <text evidence="1">An accessory protein needed during the final step in the assembly of 30S ribosomal subunit, possibly for assembly of the head region. Essential for efficient processing of 16S rRNA. May be needed both before and after RbfA during the maturation of 16S rRNA. It has affinity for free ribosomal 30S subunits but not for 70S ribosomes.</text>
</comment>
<comment type="subunit">
    <text evidence="1">Binds ribosomal protein uS19.</text>
</comment>
<comment type="subcellular location">
    <subcellularLocation>
        <location evidence="1">Cytoplasm</location>
    </subcellularLocation>
</comment>
<comment type="domain">
    <text evidence="1">The PRC barrel domain binds ribosomal protein uS19.</text>
</comment>
<comment type="similarity">
    <text evidence="1">Belongs to the RimM family.</text>
</comment>
<protein>
    <recommendedName>
        <fullName evidence="1">Ribosome maturation factor RimM</fullName>
    </recommendedName>
</protein>
<reference key="1">
    <citation type="journal article" date="2006" name="PLoS Genet.">
        <title>Comparative genomics of emerging human ehrlichiosis agents.</title>
        <authorList>
            <person name="Dunning Hotopp J.C."/>
            <person name="Lin M."/>
            <person name="Madupu R."/>
            <person name="Crabtree J."/>
            <person name="Angiuoli S.V."/>
            <person name="Eisen J.A."/>
            <person name="Seshadri R."/>
            <person name="Ren Q."/>
            <person name="Wu M."/>
            <person name="Utterback T.R."/>
            <person name="Smith S."/>
            <person name="Lewis M."/>
            <person name="Khouri H."/>
            <person name="Zhang C."/>
            <person name="Niu H."/>
            <person name="Lin Q."/>
            <person name="Ohashi N."/>
            <person name="Zhi N."/>
            <person name="Nelson W.C."/>
            <person name="Brinkac L.M."/>
            <person name="Dodson R.J."/>
            <person name="Rosovitz M.J."/>
            <person name="Sundaram J.P."/>
            <person name="Daugherty S.C."/>
            <person name="Davidsen T."/>
            <person name="Durkin A.S."/>
            <person name="Gwinn M.L."/>
            <person name="Haft D.H."/>
            <person name="Selengut J.D."/>
            <person name="Sullivan S.A."/>
            <person name="Zafar N."/>
            <person name="Zhou L."/>
            <person name="Benahmed F."/>
            <person name="Forberger H."/>
            <person name="Halpin R."/>
            <person name="Mulligan S."/>
            <person name="Robinson J."/>
            <person name="White O."/>
            <person name="Rikihisa Y."/>
            <person name="Tettelin H."/>
        </authorList>
    </citation>
    <scope>NUCLEOTIDE SEQUENCE [LARGE SCALE GENOMIC DNA]</scope>
    <source>
        <strain>ATCC VR-367 / Miyayama</strain>
    </source>
</reference>
<dbReference type="EMBL" id="CP000237">
    <property type="protein sequence ID" value="ABD45826.1"/>
    <property type="molecule type" value="Genomic_DNA"/>
</dbReference>
<dbReference type="SMR" id="Q2GES2"/>
<dbReference type="STRING" id="222891.NSE_0124"/>
<dbReference type="KEGG" id="nse:NSE_0124"/>
<dbReference type="eggNOG" id="COG0806">
    <property type="taxonomic scope" value="Bacteria"/>
</dbReference>
<dbReference type="HOGENOM" id="CLU_077636_3_2_5"/>
<dbReference type="OrthoDB" id="9788191at2"/>
<dbReference type="Proteomes" id="UP000001942">
    <property type="component" value="Chromosome"/>
</dbReference>
<dbReference type="GO" id="GO:0005737">
    <property type="term" value="C:cytoplasm"/>
    <property type="evidence" value="ECO:0007669"/>
    <property type="project" value="UniProtKB-SubCell"/>
</dbReference>
<dbReference type="GO" id="GO:0005840">
    <property type="term" value="C:ribosome"/>
    <property type="evidence" value="ECO:0007669"/>
    <property type="project" value="InterPro"/>
</dbReference>
<dbReference type="GO" id="GO:0043022">
    <property type="term" value="F:ribosome binding"/>
    <property type="evidence" value="ECO:0007669"/>
    <property type="project" value="InterPro"/>
</dbReference>
<dbReference type="GO" id="GO:0042274">
    <property type="term" value="P:ribosomal small subunit biogenesis"/>
    <property type="evidence" value="ECO:0007669"/>
    <property type="project" value="UniProtKB-UniRule"/>
</dbReference>
<dbReference type="GO" id="GO:0006364">
    <property type="term" value="P:rRNA processing"/>
    <property type="evidence" value="ECO:0007669"/>
    <property type="project" value="UniProtKB-UniRule"/>
</dbReference>
<dbReference type="Gene3D" id="2.30.30.240">
    <property type="entry name" value="PRC-barrel domain"/>
    <property type="match status" value="1"/>
</dbReference>
<dbReference type="Gene3D" id="2.40.30.60">
    <property type="entry name" value="RimM"/>
    <property type="match status" value="1"/>
</dbReference>
<dbReference type="HAMAP" id="MF_00014">
    <property type="entry name" value="Ribosome_mat_RimM"/>
    <property type="match status" value="1"/>
</dbReference>
<dbReference type="InterPro" id="IPR011033">
    <property type="entry name" value="PRC_barrel-like_sf"/>
</dbReference>
<dbReference type="InterPro" id="IPR056792">
    <property type="entry name" value="PRC_RimM"/>
</dbReference>
<dbReference type="InterPro" id="IPR011961">
    <property type="entry name" value="RimM"/>
</dbReference>
<dbReference type="InterPro" id="IPR002676">
    <property type="entry name" value="RimM_N"/>
</dbReference>
<dbReference type="InterPro" id="IPR036976">
    <property type="entry name" value="RimM_N_sf"/>
</dbReference>
<dbReference type="InterPro" id="IPR009000">
    <property type="entry name" value="Transl_B-barrel_sf"/>
</dbReference>
<dbReference type="NCBIfam" id="TIGR02273">
    <property type="entry name" value="16S_RimM"/>
    <property type="match status" value="1"/>
</dbReference>
<dbReference type="PANTHER" id="PTHR33692">
    <property type="entry name" value="RIBOSOME MATURATION FACTOR RIMM"/>
    <property type="match status" value="1"/>
</dbReference>
<dbReference type="PANTHER" id="PTHR33692:SF1">
    <property type="entry name" value="RIBOSOME MATURATION FACTOR RIMM"/>
    <property type="match status" value="1"/>
</dbReference>
<dbReference type="Pfam" id="PF24986">
    <property type="entry name" value="PRC_RimM"/>
    <property type="match status" value="1"/>
</dbReference>
<dbReference type="Pfam" id="PF01782">
    <property type="entry name" value="RimM"/>
    <property type="match status" value="1"/>
</dbReference>
<dbReference type="SUPFAM" id="SSF50346">
    <property type="entry name" value="PRC-barrel domain"/>
    <property type="match status" value="1"/>
</dbReference>
<dbReference type="SUPFAM" id="SSF50447">
    <property type="entry name" value="Translation proteins"/>
    <property type="match status" value="1"/>
</dbReference>
<sequence>MNDMVCAGRVTSTHGVRGCVRFRSYMSVDFKFPGIDVSIGGVSYTVCGAFSRGFPMFVLTLSRVGSACEAEKLVGFDVFLSESLLPPLQVGEYYCKDLVGLAVYDLEECVGHVSMLYDFGAAAEVLEIVLLSGKKVMIPFTSAFVADIDLNKKRLAVVFPPEI</sequence>
<evidence type="ECO:0000255" key="1">
    <source>
        <dbReference type="HAMAP-Rule" id="MF_00014"/>
    </source>
</evidence>
<accession>Q2GES2</accession>